<evidence type="ECO:0000255" key="1">
    <source>
        <dbReference type="HAMAP-Rule" id="MF_00099"/>
    </source>
</evidence>
<evidence type="ECO:0000305" key="2"/>
<keyword id="KW-0145">Chemotaxis</keyword>
<keyword id="KW-0963">Cytoplasm</keyword>
<keyword id="KW-0378">Hydrolase</keyword>
<keyword id="KW-0597">Phosphoprotein</keyword>
<comment type="function">
    <text evidence="1">Involved in chemotaxis. Part of a chemotaxis signal transduction system that modulates chemotaxis in response to various stimuli. Catalyzes the demethylation of specific methylglutamate residues introduced into the chemoreceptors (methyl-accepting chemotaxis proteins or MCP) by CheR. Also mediates the irreversible deamidation of specific glutamine residues to glutamic acid.</text>
</comment>
<comment type="catalytic activity">
    <reaction evidence="1">
        <text>[protein]-L-glutamate 5-O-methyl ester + H2O = L-glutamyl-[protein] + methanol + H(+)</text>
        <dbReference type="Rhea" id="RHEA:23236"/>
        <dbReference type="Rhea" id="RHEA-COMP:10208"/>
        <dbReference type="Rhea" id="RHEA-COMP:10311"/>
        <dbReference type="ChEBI" id="CHEBI:15377"/>
        <dbReference type="ChEBI" id="CHEBI:15378"/>
        <dbReference type="ChEBI" id="CHEBI:17790"/>
        <dbReference type="ChEBI" id="CHEBI:29973"/>
        <dbReference type="ChEBI" id="CHEBI:82795"/>
        <dbReference type="EC" id="3.1.1.61"/>
    </reaction>
</comment>
<comment type="catalytic activity">
    <reaction evidence="1">
        <text>L-glutaminyl-[protein] + H2O = L-glutamyl-[protein] + NH4(+)</text>
        <dbReference type="Rhea" id="RHEA:16441"/>
        <dbReference type="Rhea" id="RHEA-COMP:10207"/>
        <dbReference type="Rhea" id="RHEA-COMP:10208"/>
        <dbReference type="ChEBI" id="CHEBI:15377"/>
        <dbReference type="ChEBI" id="CHEBI:28938"/>
        <dbReference type="ChEBI" id="CHEBI:29973"/>
        <dbReference type="ChEBI" id="CHEBI:30011"/>
        <dbReference type="EC" id="3.5.1.44"/>
    </reaction>
</comment>
<comment type="subcellular location">
    <subcellularLocation>
        <location evidence="1">Cytoplasm</location>
    </subcellularLocation>
</comment>
<comment type="domain">
    <text evidence="1">Contains a C-terminal catalytic domain, and an N-terminal region which modulates catalytic activity.</text>
</comment>
<comment type="PTM">
    <text evidence="1">Phosphorylated by CheA. Phosphorylation of the N-terminal regulatory domain activates the methylesterase activity.</text>
</comment>
<comment type="similarity">
    <text evidence="1">Belongs to the CheB family.</text>
</comment>
<comment type="sequence caution" evidence="2">
    <conflict type="erroneous initiation">
        <sequence resource="EMBL-CDS" id="ABD90190"/>
    </conflict>
</comment>
<protein>
    <recommendedName>
        <fullName evidence="1">Protein-glutamate methylesterase/protein-glutamine glutaminase 3</fullName>
        <ecNumber evidence="1">3.1.1.61</ecNumber>
        <ecNumber evidence="1">3.5.1.44</ecNumber>
    </recommendedName>
</protein>
<organism>
    <name type="scientific">Rhodopseudomonas palustris (strain BisB18)</name>
    <dbReference type="NCBI Taxonomy" id="316056"/>
    <lineage>
        <taxon>Bacteria</taxon>
        <taxon>Pseudomonadati</taxon>
        <taxon>Pseudomonadota</taxon>
        <taxon>Alphaproteobacteria</taxon>
        <taxon>Hyphomicrobiales</taxon>
        <taxon>Nitrobacteraceae</taxon>
        <taxon>Rhodopseudomonas</taxon>
    </lineage>
</organism>
<name>CHEB3_RHOPB</name>
<reference key="1">
    <citation type="submission" date="2006-03" db="EMBL/GenBank/DDBJ databases">
        <title>Complete sequence of Rhodopseudomonas palustris BisB18.</title>
        <authorList>
            <consortium name="US DOE Joint Genome Institute"/>
            <person name="Copeland A."/>
            <person name="Lucas S."/>
            <person name="Lapidus A."/>
            <person name="Barry K."/>
            <person name="Detter J.C."/>
            <person name="Glavina del Rio T."/>
            <person name="Hammon N."/>
            <person name="Israni S."/>
            <person name="Dalin E."/>
            <person name="Tice H."/>
            <person name="Pitluck S."/>
            <person name="Chain P."/>
            <person name="Malfatti S."/>
            <person name="Shin M."/>
            <person name="Vergez L."/>
            <person name="Schmutz J."/>
            <person name="Larimer F."/>
            <person name="Land M."/>
            <person name="Hauser L."/>
            <person name="Pelletier D.A."/>
            <person name="Kyrpides N."/>
            <person name="Anderson I."/>
            <person name="Oda Y."/>
            <person name="Harwood C.S."/>
            <person name="Richardson P."/>
        </authorList>
    </citation>
    <scope>NUCLEOTIDE SEQUENCE [LARGE SCALE GENOMIC DNA]</scope>
    <source>
        <strain>BisB18</strain>
    </source>
</reference>
<sequence length="364" mass="39539">MLRPKIRVLIVDDSASVRQILTTILNADPDIEVMASAADPFAAARRLQDEIPDVIILDIEMPRMDGITFLRKIMAQRPIPVIICSTLTEERSDVMFEAFEAGAFDIVPKPRIDTTHALLEASARMCDAVKAAARARIRPRRPPRMVVEAKLTADAIMPPPVSGRARPTTERLVCIGVSTGGTEALRDVLECLPAKAPAILIVQHMPQGFTAAFAKRLDSLCEIEVREAQDGDVVVQGCAYIAPGGRHMLLQRTGQRYHIAIKDGPPVSRHRPSADVLFRSAAQYAGPNALGIIMTGMGDDGARGLLEMHKLGATTRAQDEESCVVFGMPKEAIALGGVDKVVPLAQIPREIMLWQDAKQPVPTV</sequence>
<feature type="chain" id="PRO_0000264308" description="Protein-glutamate methylesterase/protein-glutamine glutaminase 3">
    <location>
        <begin position="1"/>
        <end position="364"/>
    </location>
</feature>
<feature type="domain" description="Response regulatory" evidence="1">
    <location>
        <begin position="7"/>
        <end position="124"/>
    </location>
</feature>
<feature type="domain" description="CheB-type methylesterase" evidence="1">
    <location>
        <begin position="167"/>
        <end position="358"/>
    </location>
</feature>
<feature type="active site" evidence="1">
    <location>
        <position position="178"/>
    </location>
</feature>
<feature type="active site" evidence="1">
    <location>
        <position position="204"/>
    </location>
</feature>
<feature type="active site" evidence="1">
    <location>
        <position position="300"/>
    </location>
</feature>
<feature type="modified residue" description="4-aspartylphosphate" evidence="1">
    <location>
        <position position="58"/>
    </location>
</feature>
<gene>
    <name evidence="1" type="primary">cheB3</name>
    <name type="ordered locus">RPC_4668</name>
</gene>
<dbReference type="EC" id="3.1.1.61" evidence="1"/>
<dbReference type="EC" id="3.5.1.44" evidence="1"/>
<dbReference type="EMBL" id="CP000301">
    <property type="protein sequence ID" value="ABD90190.1"/>
    <property type="status" value="ALT_INIT"/>
    <property type="molecule type" value="Genomic_DNA"/>
</dbReference>
<dbReference type="SMR" id="Q20XE6"/>
<dbReference type="STRING" id="316056.RPC_4668"/>
<dbReference type="KEGG" id="rpc:RPC_4668"/>
<dbReference type="eggNOG" id="COG2201">
    <property type="taxonomic scope" value="Bacteria"/>
</dbReference>
<dbReference type="HOGENOM" id="CLU_000445_51_0_5"/>
<dbReference type="OrthoDB" id="9793421at2"/>
<dbReference type="GO" id="GO:0005737">
    <property type="term" value="C:cytoplasm"/>
    <property type="evidence" value="ECO:0007669"/>
    <property type="project" value="UniProtKB-SubCell"/>
</dbReference>
<dbReference type="GO" id="GO:0000156">
    <property type="term" value="F:phosphorelay response regulator activity"/>
    <property type="evidence" value="ECO:0007669"/>
    <property type="project" value="InterPro"/>
</dbReference>
<dbReference type="GO" id="GO:0008984">
    <property type="term" value="F:protein-glutamate methylesterase activity"/>
    <property type="evidence" value="ECO:0007669"/>
    <property type="project" value="UniProtKB-UniRule"/>
</dbReference>
<dbReference type="GO" id="GO:0050568">
    <property type="term" value="F:protein-glutamine glutaminase activity"/>
    <property type="evidence" value="ECO:0007669"/>
    <property type="project" value="UniProtKB-UniRule"/>
</dbReference>
<dbReference type="GO" id="GO:0006935">
    <property type="term" value="P:chemotaxis"/>
    <property type="evidence" value="ECO:0007669"/>
    <property type="project" value="UniProtKB-UniRule"/>
</dbReference>
<dbReference type="CDD" id="cd16432">
    <property type="entry name" value="CheB_Rec"/>
    <property type="match status" value="1"/>
</dbReference>
<dbReference type="CDD" id="cd17541">
    <property type="entry name" value="REC_CheB-like"/>
    <property type="match status" value="1"/>
</dbReference>
<dbReference type="Gene3D" id="3.40.50.2300">
    <property type="match status" value="1"/>
</dbReference>
<dbReference type="Gene3D" id="3.40.50.180">
    <property type="entry name" value="Methylesterase CheB, C-terminal domain"/>
    <property type="match status" value="1"/>
</dbReference>
<dbReference type="HAMAP" id="MF_00099">
    <property type="entry name" value="CheB_chemtxs"/>
    <property type="match status" value="1"/>
</dbReference>
<dbReference type="InterPro" id="IPR008248">
    <property type="entry name" value="CheB-like"/>
</dbReference>
<dbReference type="InterPro" id="IPR035909">
    <property type="entry name" value="CheB_C"/>
</dbReference>
<dbReference type="InterPro" id="IPR011006">
    <property type="entry name" value="CheY-like_superfamily"/>
</dbReference>
<dbReference type="InterPro" id="IPR000673">
    <property type="entry name" value="Sig_transdc_resp-reg_Me-estase"/>
</dbReference>
<dbReference type="InterPro" id="IPR001789">
    <property type="entry name" value="Sig_transdc_resp-reg_receiver"/>
</dbReference>
<dbReference type="NCBIfam" id="NF001965">
    <property type="entry name" value="PRK00742.1"/>
    <property type="match status" value="1"/>
</dbReference>
<dbReference type="NCBIfam" id="NF009206">
    <property type="entry name" value="PRK12555.1"/>
    <property type="match status" value="1"/>
</dbReference>
<dbReference type="PANTHER" id="PTHR42872">
    <property type="entry name" value="PROTEIN-GLUTAMATE METHYLESTERASE/PROTEIN-GLUTAMINE GLUTAMINASE"/>
    <property type="match status" value="1"/>
</dbReference>
<dbReference type="PANTHER" id="PTHR42872:SF6">
    <property type="entry name" value="PROTEIN-GLUTAMATE METHYLESTERASE_PROTEIN-GLUTAMINE GLUTAMINASE"/>
    <property type="match status" value="1"/>
</dbReference>
<dbReference type="Pfam" id="PF01339">
    <property type="entry name" value="CheB_methylest"/>
    <property type="match status" value="1"/>
</dbReference>
<dbReference type="Pfam" id="PF00072">
    <property type="entry name" value="Response_reg"/>
    <property type="match status" value="1"/>
</dbReference>
<dbReference type="PIRSF" id="PIRSF000876">
    <property type="entry name" value="RR_chemtxs_CheB"/>
    <property type="match status" value="1"/>
</dbReference>
<dbReference type="SMART" id="SM00448">
    <property type="entry name" value="REC"/>
    <property type="match status" value="1"/>
</dbReference>
<dbReference type="SUPFAM" id="SSF52172">
    <property type="entry name" value="CheY-like"/>
    <property type="match status" value="1"/>
</dbReference>
<dbReference type="SUPFAM" id="SSF52738">
    <property type="entry name" value="Methylesterase CheB, C-terminal domain"/>
    <property type="match status" value="1"/>
</dbReference>
<dbReference type="PROSITE" id="PS50122">
    <property type="entry name" value="CHEB"/>
    <property type="match status" value="1"/>
</dbReference>
<dbReference type="PROSITE" id="PS50110">
    <property type="entry name" value="RESPONSE_REGULATORY"/>
    <property type="match status" value="1"/>
</dbReference>
<proteinExistence type="inferred from homology"/>
<accession>Q20XE6</accession>